<comment type="function">
    <text evidence="1">Involved in the base excision repair (BER) pathway, by catalyzing the poly(ADP-ribosyl)ation of a limited number of acceptor proteins involved in chromatin architecture and in DNA metabolism. This modification follows DNA damages and appears as an obligatory step in a detection/signaling pathway leading to the reparation of DNA strand breaks (By similarity).</text>
</comment>
<comment type="catalytic activity">
    <reaction evidence="1">
        <text>NAD(+) + (ADP-D-ribosyl)n-acceptor = nicotinamide + (ADP-D-ribosyl)n+1-acceptor + H(+).</text>
        <dbReference type="EC" id="2.4.2.30"/>
    </reaction>
</comment>
<comment type="catalytic activity">
    <reaction evidence="1">
        <text>L-aspartyl-[protein] + NAD(+) = 4-O-(ADP-D-ribosyl)-L-aspartyl-[protein] + nicotinamide</text>
        <dbReference type="Rhea" id="RHEA:54424"/>
        <dbReference type="Rhea" id="RHEA-COMP:9867"/>
        <dbReference type="Rhea" id="RHEA-COMP:13832"/>
        <dbReference type="ChEBI" id="CHEBI:17154"/>
        <dbReference type="ChEBI" id="CHEBI:29961"/>
        <dbReference type="ChEBI" id="CHEBI:57540"/>
        <dbReference type="ChEBI" id="CHEBI:138102"/>
    </reaction>
</comment>
<comment type="catalytic activity">
    <reaction evidence="1">
        <text>L-glutamyl-[protein] + NAD(+) = 5-O-(ADP-D-ribosyl)-L-glutamyl-[protein] + nicotinamide</text>
        <dbReference type="Rhea" id="RHEA:58224"/>
        <dbReference type="Rhea" id="RHEA-COMP:10208"/>
        <dbReference type="Rhea" id="RHEA-COMP:15089"/>
        <dbReference type="ChEBI" id="CHEBI:17154"/>
        <dbReference type="ChEBI" id="CHEBI:29973"/>
        <dbReference type="ChEBI" id="CHEBI:57540"/>
        <dbReference type="ChEBI" id="CHEBI:142540"/>
    </reaction>
</comment>
<comment type="subcellular location">
    <subcellularLocation>
        <location evidence="6">Nucleus</location>
    </subcellularLocation>
</comment>
<comment type="similarity">
    <text evidence="6">Belongs to the ARTD/PARP family.</text>
</comment>
<comment type="sequence caution" evidence="6">
    <conflict type="erroneous gene model prediction">
        <sequence resource="EMBL-CDS" id="BAF04897"/>
    </conflict>
</comment>
<dbReference type="EC" id="2.4.2.30" evidence="1"/>
<dbReference type="EC" id="2.4.2.-" evidence="1"/>
<dbReference type="EMBL" id="AP003258">
    <property type="status" value="NOT_ANNOTATED_CDS"/>
    <property type="molecule type" value="Genomic_DNA"/>
</dbReference>
<dbReference type="EMBL" id="AP003764">
    <property type="status" value="NOT_ANNOTATED_CDS"/>
    <property type="molecule type" value="Genomic_DNA"/>
</dbReference>
<dbReference type="EMBL" id="AP008207">
    <property type="protein sequence ID" value="BAF04897.2"/>
    <property type="status" value="ALT_SEQ"/>
    <property type="molecule type" value="Genomic_DNA"/>
</dbReference>
<dbReference type="EMBL" id="AP014957">
    <property type="status" value="NOT_ANNOTATED_CDS"/>
    <property type="molecule type" value="Genomic_DNA"/>
</dbReference>
<dbReference type="SMR" id="Q0JMY1"/>
<dbReference type="FunCoup" id="Q0JMY1">
    <property type="interactions" value="1572"/>
</dbReference>
<dbReference type="STRING" id="39947.Q0JMY1"/>
<dbReference type="PaxDb" id="39947-Q0JMY1"/>
<dbReference type="KEGG" id="dosa:Os01g0351100"/>
<dbReference type="eggNOG" id="KOG1037">
    <property type="taxonomic scope" value="Eukaryota"/>
</dbReference>
<dbReference type="HOGENOM" id="CLU_004841_1_0_1"/>
<dbReference type="InParanoid" id="Q0JMY1"/>
<dbReference type="Proteomes" id="UP000000763">
    <property type="component" value="Chromosome 1"/>
</dbReference>
<dbReference type="Proteomes" id="UP000059680">
    <property type="component" value="Chromosome 1"/>
</dbReference>
<dbReference type="GO" id="GO:0005730">
    <property type="term" value="C:nucleolus"/>
    <property type="evidence" value="ECO:0000318"/>
    <property type="project" value="GO_Central"/>
</dbReference>
<dbReference type="GO" id="GO:0003950">
    <property type="term" value="F:NAD+ poly-ADP-ribosyltransferase activity"/>
    <property type="evidence" value="ECO:0000318"/>
    <property type="project" value="GO_Central"/>
</dbReference>
<dbReference type="GO" id="GO:0140806">
    <property type="term" value="F:NAD+-protein-aspartate ADP-ribosyltransferase activity"/>
    <property type="evidence" value="ECO:0007669"/>
    <property type="project" value="RHEA"/>
</dbReference>
<dbReference type="GO" id="GO:0140807">
    <property type="term" value="F:NAD+-protein-glutamate ADP-ribosyltransferase activity"/>
    <property type="evidence" value="ECO:0007669"/>
    <property type="project" value="RHEA"/>
</dbReference>
<dbReference type="GO" id="GO:0016779">
    <property type="term" value="F:nucleotidyltransferase activity"/>
    <property type="evidence" value="ECO:0007669"/>
    <property type="project" value="UniProtKB-KW"/>
</dbReference>
<dbReference type="GO" id="GO:0006302">
    <property type="term" value="P:double-strand break repair"/>
    <property type="evidence" value="ECO:0000318"/>
    <property type="project" value="GO_Central"/>
</dbReference>
<dbReference type="CDD" id="cd01437">
    <property type="entry name" value="parp_like"/>
    <property type="match status" value="1"/>
</dbReference>
<dbReference type="FunFam" id="1.20.142.10:FF:000005">
    <property type="entry name" value="Poly [ADP-ribose] polymerase"/>
    <property type="match status" value="1"/>
</dbReference>
<dbReference type="FunFam" id="3.90.228.10:FF:000002">
    <property type="entry name" value="Poly [ADP-ribose] polymerase"/>
    <property type="match status" value="1"/>
</dbReference>
<dbReference type="Gene3D" id="3.90.228.10">
    <property type="match status" value="1"/>
</dbReference>
<dbReference type="Gene3D" id="1.20.142.10">
    <property type="entry name" value="Poly(ADP-ribose) polymerase, regulatory domain"/>
    <property type="match status" value="1"/>
</dbReference>
<dbReference type="InterPro" id="IPR050800">
    <property type="entry name" value="ARTD/PARP"/>
</dbReference>
<dbReference type="InterPro" id="IPR012317">
    <property type="entry name" value="Poly(ADP-ribose)pol_cat_dom"/>
</dbReference>
<dbReference type="InterPro" id="IPR004102">
    <property type="entry name" value="Poly(ADP-ribose)pol_reg_dom"/>
</dbReference>
<dbReference type="InterPro" id="IPR036616">
    <property type="entry name" value="Poly(ADP-ribose)pol_reg_dom_sf"/>
</dbReference>
<dbReference type="InterPro" id="IPR036930">
    <property type="entry name" value="WGR_dom_sf"/>
</dbReference>
<dbReference type="InterPro" id="IPR008893">
    <property type="entry name" value="WGR_domain"/>
</dbReference>
<dbReference type="PANTHER" id="PTHR10459">
    <property type="entry name" value="DNA LIGASE"/>
    <property type="match status" value="1"/>
</dbReference>
<dbReference type="PANTHER" id="PTHR10459:SF60">
    <property type="entry name" value="POLY [ADP-RIBOSE] POLYMERASE 2"/>
    <property type="match status" value="1"/>
</dbReference>
<dbReference type="Pfam" id="PF00644">
    <property type="entry name" value="PARP"/>
    <property type="match status" value="1"/>
</dbReference>
<dbReference type="Pfam" id="PF02877">
    <property type="entry name" value="PARP_reg"/>
    <property type="match status" value="1"/>
</dbReference>
<dbReference type="Pfam" id="PF05406">
    <property type="entry name" value="WGR"/>
    <property type="match status" value="1"/>
</dbReference>
<dbReference type="SMART" id="SM00773">
    <property type="entry name" value="WGR"/>
    <property type="match status" value="1"/>
</dbReference>
<dbReference type="SUPFAM" id="SSF56399">
    <property type="entry name" value="ADP-ribosylation"/>
    <property type="match status" value="1"/>
</dbReference>
<dbReference type="SUPFAM" id="SSF47587">
    <property type="entry name" value="Domain of poly(ADP-ribose) polymerase"/>
    <property type="match status" value="1"/>
</dbReference>
<dbReference type="SUPFAM" id="SSF142921">
    <property type="entry name" value="WGR domain-like"/>
    <property type="match status" value="1"/>
</dbReference>
<dbReference type="PROSITE" id="PS51060">
    <property type="entry name" value="PARP_ALPHA_HD"/>
    <property type="match status" value="1"/>
</dbReference>
<dbReference type="PROSITE" id="PS51059">
    <property type="entry name" value="PARP_CATALYTIC"/>
    <property type="match status" value="1"/>
</dbReference>
<dbReference type="PROSITE" id="PS51977">
    <property type="entry name" value="WGR"/>
    <property type="match status" value="1"/>
</dbReference>
<proteinExistence type="inferred from homology"/>
<accession>Q0JMY1</accession>
<gene>
    <name type="primary">PARP2-B</name>
    <name type="ordered locus">Os01g0351100</name>
    <name type="ordered locus">LOC_Os01g24920</name>
    <name type="ORF">B1051E10.53</name>
    <name type="ORF">P0463A02.23</name>
</gene>
<protein>
    <recommendedName>
        <fullName>Poly [ADP-ribose] polymerase 2-B</fullName>
        <shortName>PARP-2-B</shortName>
        <ecNumber evidence="1">2.4.2.30</ecNumber>
    </recommendedName>
    <alternativeName>
        <fullName>NAD(+) ADP-ribosyltransferase 2-B</fullName>
        <shortName>ADPRT-2-B</shortName>
    </alternativeName>
    <alternativeName>
        <fullName>Poly[ADP-ribose] synthase 2-B</fullName>
    </alternativeName>
    <alternativeName>
        <fullName evidence="1">Protein ADP-ribosyltransferase PARP2</fullName>
        <ecNumber evidence="1">2.4.2.-</ecNumber>
    </alternativeName>
</protein>
<keyword id="KW-0013">ADP-ribosylation</keyword>
<keyword id="KW-0328">Glycosyltransferase</keyword>
<keyword id="KW-0520">NAD</keyword>
<keyword id="KW-0548">Nucleotidyltransferase</keyword>
<keyword id="KW-0539">Nucleus</keyword>
<keyword id="KW-1185">Reference proteome</keyword>
<keyword id="KW-0808">Transferase</keyword>
<organism>
    <name type="scientific">Oryza sativa subsp. japonica</name>
    <name type="common">Rice</name>
    <dbReference type="NCBI Taxonomy" id="39947"/>
    <lineage>
        <taxon>Eukaryota</taxon>
        <taxon>Viridiplantae</taxon>
        <taxon>Streptophyta</taxon>
        <taxon>Embryophyta</taxon>
        <taxon>Tracheophyta</taxon>
        <taxon>Spermatophyta</taxon>
        <taxon>Magnoliopsida</taxon>
        <taxon>Liliopsida</taxon>
        <taxon>Poales</taxon>
        <taxon>Poaceae</taxon>
        <taxon>BOP clade</taxon>
        <taxon>Oryzoideae</taxon>
        <taxon>Oryzeae</taxon>
        <taxon>Oryzinae</taxon>
        <taxon>Oryza</taxon>
        <taxon>Oryza sativa</taxon>
    </lineage>
</organism>
<feature type="chain" id="PRO_0000260507" description="Poly [ADP-ribose] polymerase 2-B">
    <location>
        <begin position="1"/>
        <end position="605"/>
    </location>
</feature>
<feature type="domain" description="WGR" evidence="4">
    <location>
        <begin position="153"/>
        <end position="260"/>
    </location>
</feature>
<feature type="domain" description="PARP alpha-helical" evidence="3">
    <location>
        <begin position="250"/>
        <end position="370"/>
    </location>
</feature>
<feature type="domain" description="PARP catalytic" evidence="2">
    <location>
        <begin position="378"/>
        <end position="605"/>
    </location>
</feature>
<feature type="region of interest" description="Disordered" evidence="5">
    <location>
        <begin position="96"/>
        <end position="122"/>
    </location>
</feature>
<feature type="compositionally biased region" description="Basic and acidic residues" evidence="5">
    <location>
        <begin position="108"/>
        <end position="122"/>
    </location>
</feature>
<reference key="1">
    <citation type="journal article" date="2002" name="Nature">
        <title>The genome sequence and structure of rice chromosome 1.</title>
        <authorList>
            <person name="Sasaki T."/>
            <person name="Matsumoto T."/>
            <person name="Yamamoto K."/>
            <person name="Sakata K."/>
            <person name="Baba T."/>
            <person name="Katayose Y."/>
            <person name="Wu J."/>
            <person name="Niimura Y."/>
            <person name="Cheng Z."/>
            <person name="Nagamura Y."/>
            <person name="Antonio B.A."/>
            <person name="Kanamori H."/>
            <person name="Hosokawa S."/>
            <person name="Masukawa M."/>
            <person name="Arikawa K."/>
            <person name="Chiden Y."/>
            <person name="Hayashi M."/>
            <person name="Okamoto M."/>
            <person name="Ando T."/>
            <person name="Aoki H."/>
            <person name="Arita K."/>
            <person name="Hamada M."/>
            <person name="Harada C."/>
            <person name="Hijishita S."/>
            <person name="Honda M."/>
            <person name="Ichikawa Y."/>
            <person name="Idonuma A."/>
            <person name="Iijima M."/>
            <person name="Ikeda M."/>
            <person name="Ikeno M."/>
            <person name="Ito S."/>
            <person name="Ito T."/>
            <person name="Ito Y."/>
            <person name="Ito Y."/>
            <person name="Iwabuchi A."/>
            <person name="Kamiya K."/>
            <person name="Karasawa W."/>
            <person name="Katagiri S."/>
            <person name="Kikuta A."/>
            <person name="Kobayashi N."/>
            <person name="Kono I."/>
            <person name="Machita K."/>
            <person name="Maehara T."/>
            <person name="Mizuno H."/>
            <person name="Mizubayashi T."/>
            <person name="Mukai Y."/>
            <person name="Nagasaki H."/>
            <person name="Nakashima M."/>
            <person name="Nakama Y."/>
            <person name="Nakamichi Y."/>
            <person name="Nakamura M."/>
            <person name="Namiki N."/>
            <person name="Negishi M."/>
            <person name="Ohta I."/>
            <person name="Ono N."/>
            <person name="Saji S."/>
            <person name="Sakai K."/>
            <person name="Shibata M."/>
            <person name="Shimokawa T."/>
            <person name="Shomura A."/>
            <person name="Song J."/>
            <person name="Takazaki Y."/>
            <person name="Terasawa K."/>
            <person name="Tsuji K."/>
            <person name="Waki K."/>
            <person name="Yamagata H."/>
            <person name="Yamane H."/>
            <person name="Yoshiki S."/>
            <person name="Yoshihara R."/>
            <person name="Yukawa K."/>
            <person name="Zhong H."/>
            <person name="Iwama H."/>
            <person name="Endo T."/>
            <person name="Ito H."/>
            <person name="Hahn J.H."/>
            <person name="Kim H.-I."/>
            <person name="Eun M.-Y."/>
            <person name="Yano M."/>
            <person name="Jiang J."/>
            <person name="Gojobori T."/>
        </authorList>
    </citation>
    <scope>NUCLEOTIDE SEQUENCE [LARGE SCALE GENOMIC DNA]</scope>
    <source>
        <strain>cv. Nipponbare</strain>
    </source>
</reference>
<reference key="2">
    <citation type="journal article" date="2005" name="Nature">
        <title>The map-based sequence of the rice genome.</title>
        <authorList>
            <consortium name="International rice genome sequencing project (IRGSP)"/>
        </authorList>
    </citation>
    <scope>NUCLEOTIDE SEQUENCE [LARGE SCALE GENOMIC DNA]</scope>
    <source>
        <strain>cv. Nipponbare</strain>
    </source>
</reference>
<reference key="3">
    <citation type="journal article" date="2008" name="Nucleic Acids Res.">
        <title>The rice annotation project database (RAP-DB): 2008 update.</title>
        <authorList>
            <consortium name="The rice annotation project (RAP)"/>
        </authorList>
    </citation>
    <scope>GENOME REANNOTATION</scope>
    <source>
        <strain>cv. Nipponbare</strain>
    </source>
</reference>
<reference key="4">
    <citation type="journal article" date="2013" name="Rice">
        <title>Improvement of the Oryza sativa Nipponbare reference genome using next generation sequence and optical map data.</title>
        <authorList>
            <person name="Kawahara Y."/>
            <person name="de la Bastide M."/>
            <person name="Hamilton J.P."/>
            <person name="Kanamori H."/>
            <person name="McCombie W.R."/>
            <person name="Ouyang S."/>
            <person name="Schwartz D.C."/>
            <person name="Tanaka T."/>
            <person name="Wu J."/>
            <person name="Zhou S."/>
            <person name="Childs K.L."/>
            <person name="Davidson R.M."/>
            <person name="Lin H."/>
            <person name="Quesada-Ocampo L."/>
            <person name="Vaillancourt B."/>
            <person name="Sakai H."/>
            <person name="Lee S.S."/>
            <person name="Kim J."/>
            <person name="Numa H."/>
            <person name="Itoh T."/>
            <person name="Buell C.R."/>
            <person name="Matsumoto T."/>
        </authorList>
    </citation>
    <scope>GENOME REANNOTATION</scope>
    <source>
        <strain>cv. Nipponbare</strain>
    </source>
</reference>
<evidence type="ECO:0000250" key="1">
    <source>
        <dbReference type="UniProtKB" id="P09874"/>
    </source>
</evidence>
<evidence type="ECO:0000255" key="2">
    <source>
        <dbReference type="PROSITE-ProRule" id="PRU00397"/>
    </source>
</evidence>
<evidence type="ECO:0000255" key="3">
    <source>
        <dbReference type="PROSITE-ProRule" id="PRU00398"/>
    </source>
</evidence>
<evidence type="ECO:0000255" key="4">
    <source>
        <dbReference type="PROSITE-ProRule" id="PRU01321"/>
    </source>
</evidence>
<evidence type="ECO:0000256" key="5">
    <source>
        <dbReference type="SAM" id="MobiDB-lite"/>
    </source>
</evidence>
<evidence type="ECO:0000305" key="6"/>
<sequence length="605" mass="67742">MQMIGGEMWTAAGRRLHQQRDLHAILRTAHRRCCTRPIGGGLDAPAAPPGDLRTLSGVGMLIHQFKALLAPKKIYPWRSSHLQSLEVRRLHTAPSNAAAAAAVTDGGDQDKTKSAKDDDGDDKVQCKKEKIVTATKKGAAVLDQYIPDNIKTAYHVLQVGDEIYDATMNQTNVGGNNNKFYIIQALESDAGGNFMVYSRWGRVGTRDIHWSYRKGSHCYAHKYTWLEMDYGEADKETNKKTSSITNQLEETKLETRTASFISLICDISMMKQQMVEIGYNADKLPLGKLSKSTILKGYDVLKRISNVISGADTDRTQLEQLTGEFYSVIPHDFGFKKMSEFIIDTPQKLKAKLEMVEALSEIEIAIKLLEDDSSDQDHPLYARYKQFCCDFTPLEVDSEEYSMIKTYLTNTHGKTHTGYTVDIVQIFKVSRLGEMERFQKFASAGNRMLLWHGSRLTNWAGILSQGLRIAPPEAPISGFMFGKGVYFADMFSKSANYCCASEACKSGVMLLCEVALGEMNELLYGDFGADNLPNGKLSTKGVGQTEPNIAESKITDDGMVIPLGKPEKVPSRRGSLMYNEYIVYNVDQIRMRYILNVNFNFKRWG</sequence>
<name>PRP2B_ORYSJ</name>